<gene>
    <name evidence="1" type="primary">ilvC</name>
    <name type="ordered locus">STER_1848</name>
</gene>
<dbReference type="EC" id="1.1.1.86" evidence="1"/>
<dbReference type="EMBL" id="CP000419">
    <property type="protein sequence ID" value="ABJ66973.1"/>
    <property type="molecule type" value="Genomic_DNA"/>
</dbReference>
<dbReference type="RefSeq" id="WP_002952054.1">
    <property type="nucleotide sequence ID" value="NZ_CP086001.1"/>
</dbReference>
<dbReference type="SMR" id="Q03IJ9"/>
<dbReference type="KEGG" id="ste:STER_1848"/>
<dbReference type="HOGENOM" id="CLU_033821_0_1_9"/>
<dbReference type="UniPathway" id="UPA00047">
    <property type="reaction ID" value="UER00056"/>
</dbReference>
<dbReference type="UniPathway" id="UPA00049">
    <property type="reaction ID" value="UER00060"/>
</dbReference>
<dbReference type="GO" id="GO:0005829">
    <property type="term" value="C:cytosol"/>
    <property type="evidence" value="ECO:0007669"/>
    <property type="project" value="TreeGrafter"/>
</dbReference>
<dbReference type="GO" id="GO:0004455">
    <property type="term" value="F:ketol-acid reductoisomerase activity"/>
    <property type="evidence" value="ECO:0007669"/>
    <property type="project" value="UniProtKB-UniRule"/>
</dbReference>
<dbReference type="GO" id="GO:0000287">
    <property type="term" value="F:magnesium ion binding"/>
    <property type="evidence" value="ECO:0007669"/>
    <property type="project" value="UniProtKB-UniRule"/>
</dbReference>
<dbReference type="GO" id="GO:0050661">
    <property type="term" value="F:NADP binding"/>
    <property type="evidence" value="ECO:0007669"/>
    <property type="project" value="InterPro"/>
</dbReference>
<dbReference type="GO" id="GO:0009097">
    <property type="term" value="P:isoleucine biosynthetic process"/>
    <property type="evidence" value="ECO:0007669"/>
    <property type="project" value="UniProtKB-UniRule"/>
</dbReference>
<dbReference type="GO" id="GO:0009099">
    <property type="term" value="P:L-valine biosynthetic process"/>
    <property type="evidence" value="ECO:0007669"/>
    <property type="project" value="UniProtKB-UniRule"/>
</dbReference>
<dbReference type="FunFam" id="3.40.50.720:FF:000023">
    <property type="entry name" value="Ketol-acid reductoisomerase (NADP(+))"/>
    <property type="match status" value="1"/>
</dbReference>
<dbReference type="Gene3D" id="6.10.240.10">
    <property type="match status" value="1"/>
</dbReference>
<dbReference type="Gene3D" id="3.40.50.720">
    <property type="entry name" value="NAD(P)-binding Rossmann-like Domain"/>
    <property type="match status" value="1"/>
</dbReference>
<dbReference type="HAMAP" id="MF_00435">
    <property type="entry name" value="IlvC"/>
    <property type="match status" value="1"/>
</dbReference>
<dbReference type="InterPro" id="IPR008927">
    <property type="entry name" value="6-PGluconate_DH-like_C_sf"/>
</dbReference>
<dbReference type="InterPro" id="IPR013023">
    <property type="entry name" value="KARI"/>
</dbReference>
<dbReference type="InterPro" id="IPR000506">
    <property type="entry name" value="KARI_C"/>
</dbReference>
<dbReference type="InterPro" id="IPR013116">
    <property type="entry name" value="KARI_N"/>
</dbReference>
<dbReference type="InterPro" id="IPR014359">
    <property type="entry name" value="KARI_prok"/>
</dbReference>
<dbReference type="InterPro" id="IPR036291">
    <property type="entry name" value="NAD(P)-bd_dom_sf"/>
</dbReference>
<dbReference type="NCBIfam" id="TIGR00465">
    <property type="entry name" value="ilvC"/>
    <property type="match status" value="1"/>
</dbReference>
<dbReference type="NCBIfam" id="NF004017">
    <property type="entry name" value="PRK05479.1"/>
    <property type="match status" value="1"/>
</dbReference>
<dbReference type="NCBIfam" id="NF009940">
    <property type="entry name" value="PRK13403.1"/>
    <property type="match status" value="1"/>
</dbReference>
<dbReference type="PANTHER" id="PTHR21371">
    <property type="entry name" value="KETOL-ACID REDUCTOISOMERASE, MITOCHONDRIAL"/>
    <property type="match status" value="1"/>
</dbReference>
<dbReference type="PANTHER" id="PTHR21371:SF1">
    <property type="entry name" value="KETOL-ACID REDUCTOISOMERASE, MITOCHONDRIAL"/>
    <property type="match status" value="1"/>
</dbReference>
<dbReference type="Pfam" id="PF01450">
    <property type="entry name" value="KARI_C"/>
    <property type="match status" value="1"/>
</dbReference>
<dbReference type="Pfam" id="PF07991">
    <property type="entry name" value="KARI_N"/>
    <property type="match status" value="1"/>
</dbReference>
<dbReference type="PIRSF" id="PIRSF000116">
    <property type="entry name" value="IlvC_gammaproteo"/>
    <property type="match status" value="1"/>
</dbReference>
<dbReference type="SUPFAM" id="SSF48179">
    <property type="entry name" value="6-phosphogluconate dehydrogenase C-terminal domain-like"/>
    <property type="match status" value="1"/>
</dbReference>
<dbReference type="SUPFAM" id="SSF51735">
    <property type="entry name" value="NAD(P)-binding Rossmann-fold domains"/>
    <property type="match status" value="1"/>
</dbReference>
<dbReference type="PROSITE" id="PS51851">
    <property type="entry name" value="KARI_C"/>
    <property type="match status" value="1"/>
</dbReference>
<dbReference type="PROSITE" id="PS51850">
    <property type="entry name" value="KARI_N"/>
    <property type="match status" value="1"/>
</dbReference>
<organism>
    <name type="scientific">Streptococcus thermophilus (strain ATCC BAA-491 / LMD-9)</name>
    <dbReference type="NCBI Taxonomy" id="322159"/>
    <lineage>
        <taxon>Bacteria</taxon>
        <taxon>Bacillati</taxon>
        <taxon>Bacillota</taxon>
        <taxon>Bacilli</taxon>
        <taxon>Lactobacillales</taxon>
        <taxon>Streptococcaceae</taxon>
        <taxon>Streptococcus</taxon>
    </lineage>
</organism>
<reference key="1">
    <citation type="journal article" date="2006" name="Proc. Natl. Acad. Sci. U.S.A.">
        <title>Comparative genomics of the lactic acid bacteria.</title>
        <authorList>
            <person name="Makarova K.S."/>
            <person name="Slesarev A."/>
            <person name="Wolf Y.I."/>
            <person name="Sorokin A."/>
            <person name="Mirkin B."/>
            <person name="Koonin E.V."/>
            <person name="Pavlov A."/>
            <person name="Pavlova N."/>
            <person name="Karamychev V."/>
            <person name="Polouchine N."/>
            <person name="Shakhova V."/>
            <person name="Grigoriev I."/>
            <person name="Lou Y."/>
            <person name="Rohksar D."/>
            <person name="Lucas S."/>
            <person name="Huang K."/>
            <person name="Goodstein D.M."/>
            <person name="Hawkins T."/>
            <person name="Plengvidhya V."/>
            <person name="Welker D."/>
            <person name="Hughes J."/>
            <person name="Goh Y."/>
            <person name="Benson A."/>
            <person name="Baldwin K."/>
            <person name="Lee J.-H."/>
            <person name="Diaz-Muniz I."/>
            <person name="Dosti B."/>
            <person name="Smeianov V."/>
            <person name="Wechter W."/>
            <person name="Barabote R."/>
            <person name="Lorca G."/>
            <person name="Altermann E."/>
            <person name="Barrangou R."/>
            <person name="Ganesan B."/>
            <person name="Xie Y."/>
            <person name="Rawsthorne H."/>
            <person name="Tamir D."/>
            <person name="Parker C."/>
            <person name="Breidt F."/>
            <person name="Broadbent J.R."/>
            <person name="Hutkins R."/>
            <person name="O'Sullivan D."/>
            <person name="Steele J."/>
            <person name="Unlu G."/>
            <person name="Saier M.H. Jr."/>
            <person name="Klaenhammer T."/>
            <person name="Richardson P."/>
            <person name="Kozyavkin S."/>
            <person name="Weimer B.C."/>
            <person name="Mills D.A."/>
        </authorList>
    </citation>
    <scope>NUCLEOTIDE SEQUENCE [LARGE SCALE GENOMIC DNA]</scope>
    <source>
        <strain>ATCC BAA-491 / LMD-9</strain>
    </source>
</reference>
<evidence type="ECO:0000255" key="1">
    <source>
        <dbReference type="HAMAP-Rule" id="MF_00435"/>
    </source>
</evidence>
<evidence type="ECO:0000255" key="2">
    <source>
        <dbReference type="PROSITE-ProRule" id="PRU01197"/>
    </source>
</evidence>
<evidence type="ECO:0000255" key="3">
    <source>
        <dbReference type="PROSITE-ProRule" id="PRU01198"/>
    </source>
</evidence>
<accession>Q03IJ9</accession>
<proteinExistence type="inferred from homology"/>
<sequence length="340" mass="37371">MAVQMEYEKDVKVPALDGKKIAVIGYGSQGHAHSQNLRDTGHDVIIGVRPGKSFDKAKEDGFDTYTVAEATKLADVIMILAPDEIQQELYEAEIAPNLEAGNAVGFAHGFNIHFEFIKVPADVDVFMCAPKGPGHLVRRTFEEGFGVPALYAVYQDATGNAKDIAMDWCKGIGAARVGLLETTYKEETEEDLFGEQAVLCGGLTALIETGFEVLTEAGYAPELAYFEVLHEMKLIVDLIYEGGFKKMRQSISNTAEFGDYVSGPRVITEQVKENMKAVLADIQNGKFANDFVNDYKAGRPKLTAYREEAANLEIEKVGAELRKAMPFVGQNDDDAFKIYN</sequence>
<comment type="function">
    <text evidence="1">Involved in the biosynthesis of branched-chain amino acids (BCAA). Catalyzes an alkyl-migration followed by a ketol-acid reduction of (S)-2-acetolactate (S2AL) to yield (R)-2,3-dihydroxy-isovalerate. In the isomerase reaction, S2AL is rearranged via a Mg-dependent methyl migration to produce 3-hydroxy-3-methyl-2-ketobutyrate (HMKB). In the reductase reaction, this 2-ketoacid undergoes a metal-dependent reduction by NADPH to yield (R)-2,3-dihydroxy-isovalerate.</text>
</comment>
<comment type="catalytic activity">
    <reaction evidence="1">
        <text>(2R)-2,3-dihydroxy-3-methylbutanoate + NADP(+) = (2S)-2-acetolactate + NADPH + H(+)</text>
        <dbReference type="Rhea" id="RHEA:22068"/>
        <dbReference type="ChEBI" id="CHEBI:15378"/>
        <dbReference type="ChEBI" id="CHEBI:49072"/>
        <dbReference type="ChEBI" id="CHEBI:57783"/>
        <dbReference type="ChEBI" id="CHEBI:58349"/>
        <dbReference type="ChEBI" id="CHEBI:58476"/>
        <dbReference type="EC" id="1.1.1.86"/>
    </reaction>
</comment>
<comment type="catalytic activity">
    <reaction evidence="1">
        <text>(2R,3R)-2,3-dihydroxy-3-methylpentanoate + NADP(+) = (S)-2-ethyl-2-hydroxy-3-oxobutanoate + NADPH + H(+)</text>
        <dbReference type="Rhea" id="RHEA:13493"/>
        <dbReference type="ChEBI" id="CHEBI:15378"/>
        <dbReference type="ChEBI" id="CHEBI:49256"/>
        <dbReference type="ChEBI" id="CHEBI:49258"/>
        <dbReference type="ChEBI" id="CHEBI:57783"/>
        <dbReference type="ChEBI" id="CHEBI:58349"/>
        <dbReference type="EC" id="1.1.1.86"/>
    </reaction>
</comment>
<comment type="cofactor">
    <cofactor evidence="1">
        <name>Mg(2+)</name>
        <dbReference type="ChEBI" id="CHEBI:18420"/>
    </cofactor>
    <text evidence="1">Binds 2 magnesium ions per subunit.</text>
</comment>
<comment type="pathway">
    <text evidence="1">Amino-acid biosynthesis; L-isoleucine biosynthesis; L-isoleucine from 2-oxobutanoate: step 2/4.</text>
</comment>
<comment type="pathway">
    <text evidence="1">Amino-acid biosynthesis; L-valine biosynthesis; L-valine from pyruvate: step 2/4.</text>
</comment>
<comment type="similarity">
    <text evidence="1">Belongs to the ketol-acid reductoisomerase family.</text>
</comment>
<feature type="chain" id="PRO_1000050582" description="Ketol-acid reductoisomerase (NADP(+))">
    <location>
        <begin position="1"/>
        <end position="340"/>
    </location>
</feature>
<feature type="domain" description="KARI N-terminal Rossmann" evidence="2">
    <location>
        <begin position="3"/>
        <end position="182"/>
    </location>
</feature>
<feature type="domain" description="KARI C-terminal knotted" evidence="3">
    <location>
        <begin position="183"/>
        <end position="328"/>
    </location>
</feature>
<feature type="active site" evidence="1">
    <location>
        <position position="108"/>
    </location>
</feature>
<feature type="binding site" evidence="1">
    <location>
        <begin position="26"/>
        <end position="29"/>
    </location>
    <ligand>
        <name>NADP(+)</name>
        <dbReference type="ChEBI" id="CHEBI:58349"/>
    </ligand>
</feature>
<feature type="binding site" evidence="1">
    <location>
        <position position="49"/>
    </location>
    <ligand>
        <name>NADP(+)</name>
        <dbReference type="ChEBI" id="CHEBI:58349"/>
    </ligand>
</feature>
<feature type="binding site" evidence="1">
    <location>
        <position position="53"/>
    </location>
    <ligand>
        <name>NADP(+)</name>
        <dbReference type="ChEBI" id="CHEBI:58349"/>
    </ligand>
</feature>
<feature type="binding site" evidence="1">
    <location>
        <begin position="83"/>
        <end position="86"/>
    </location>
    <ligand>
        <name>NADP(+)</name>
        <dbReference type="ChEBI" id="CHEBI:58349"/>
    </ligand>
</feature>
<feature type="binding site" evidence="1">
    <location>
        <position position="134"/>
    </location>
    <ligand>
        <name>NADP(+)</name>
        <dbReference type="ChEBI" id="CHEBI:58349"/>
    </ligand>
</feature>
<feature type="binding site" evidence="1">
    <location>
        <position position="191"/>
    </location>
    <ligand>
        <name>Mg(2+)</name>
        <dbReference type="ChEBI" id="CHEBI:18420"/>
        <label>1</label>
    </ligand>
</feature>
<feature type="binding site" evidence="1">
    <location>
        <position position="191"/>
    </location>
    <ligand>
        <name>Mg(2+)</name>
        <dbReference type="ChEBI" id="CHEBI:18420"/>
        <label>2</label>
    </ligand>
</feature>
<feature type="binding site" evidence="1">
    <location>
        <position position="195"/>
    </location>
    <ligand>
        <name>Mg(2+)</name>
        <dbReference type="ChEBI" id="CHEBI:18420"/>
        <label>1</label>
    </ligand>
</feature>
<feature type="binding site" evidence="1">
    <location>
        <position position="227"/>
    </location>
    <ligand>
        <name>Mg(2+)</name>
        <dbReference type="ChEBI" id="CHEBI:18420"/>
        <label>2</label>
    </ligand>
</feature>
<feature type="binding site" evidence="1">
    <location>
        <position position="231"/>
    </location>
    <ligand>
        <name>Mg(2+)</name>
        <dbReference type="ChEBI" id="CHEBI:18420"/>
        <label>2</label>
    </ligand>
</feature>
<feature type="binding site" evidence="1">
    <location>
        <position position="252"/>
    </location>
    <ligand>
        <name>substrate</name>
    </ligand>
</feature>
<name>ILVC_STRTD</name>
<protein>
    <recommendedName>
        <fullName evidence="1">Ketol-acid reductoisomerase (NADP(+))</fullName>
        <shortName evidence="1">KARI</shortName>
        <ecNumber evidence="1">1.1.1.86</ecNumber>
    </recommendedName>
    <alternativeName>
        <fullName evidence="1">Acetohydroxy-acid isomeroreductase</fullName>
        <shortName evidence="1">AHIR</shortName>
    </alternativeName>
    <alternativeName>
        <fullName evidence="1">Alpha-keto-beta-hydroxylacyl reductoisomerase</fullName>
    </alternativeName>
    <alternativeName>
        <fullName evidence="1">Ketol-acid reductoisomerase type 1</fullName>
    </alternativeName>
    <alternativeName>
        <fullName evidence="1">Ketol-acid reductoisomerase type I</fullName>
    </alternativeName>
</protein>
<keyword id="KW-0028">Amino-acid biosynthesis</keyword>
<keyword id="KW-0100">Branched-chain amino acid biosynthesis</keyword>
<keyword id="KW-0460">Magnesium</keyword>
<keyword id="KW-0479">Metal-binding</keyword>
<keyword id="KW-0521">NADP</keyword>
<keyword id="KW-0560">Oxidoreductase</keyword>